<name>HDHD1_HUMAN</name>
<organism>
    <name type="scientific">Homo sapiens</name>
    <name type="common">Human</name>
    <dbReference type="NCBI Taxonomy" id="9606"/>
    <lineage>
        <taxon>Eukaryota</taxon>
        <taxon>Metazoa</taxon>
        <taxon>Chordata</taxon>
        <taxon>Craniata</taxon>
        <taxon>Vertebrata</taxon>
        <taxon>Euteleostomi</taxon>
        <taxon>Mammalia</taxon>
        <taxon>Eutheria</taxon>
        <taxon>Euarchontoglires</taxon>
        <taxon>Primates</taxon>
        <taxon>Haplorrhini</taxon>
        <taxon>Catarrhini</taxon>
        <taxon>Hominidae</taxon>
        <taxon>Homo</taxon>
    </lineage>
</organism>
<proteinExistence type="evidence at protein level"/>
<gene>
    <name evidence="8" type="primary">PUDP</name>
    <name type="synonym">DXF68S1E</name>
    <name type="synonym">FAM16AX</name>
    <name type="synonym">GS1</name>
    <name type="synonym">HDHD1</name>
    <name type="synonym">HDHD1A</name>
</gene>
<evidence type="ECO:0000250" key="1"/>
<evidence type="ECO:0000269" key="2">
    <source>
    </source>
</evidence>
<evidence type="ECO:0000269" key="3">
    <source>
    </source>
</evidence>
<evidence type="ECO:0000269" key="4">
    <source>
    </source>
</evidence>
<evidence type="ECO:0000303" key="5">
    <source>
    </source>
</evidence>
<evidence type="ECO:0000303" key="6">
    <source>
    </source>
</evidence>
<evidence type="ECO:0000305" key="7"/>
<evidence type="ECO:0000312" key="8">
    <source>
        <dbReference type="HGNC" id="HGNC:16818"/>
    </source>
</evidence>
<evidence type="ECO:0007829" key="9">
    <source>
        <dbReference type="PDB" id="3L5K"/>
    </source>
</evidence>
<accession>Q08623</accession>
<accession>B2R7X6</accession>
<accession>B4DV93</accession>
<accession>B7Z6Q3</accession>
<accession>E9PAV8</accession>
<accession>F5GWZ2</accession>
<accession>Q53F84</accession>
<accession>Q96EB8</accession>
<reference key="1">
    <citation type="journal article" date="2004" name="Nat. Genet.">
        <title>Complete sequencing and characterization of 21,243 full-length human cDNAs.</title>
        <authorList>
            <person name="Ota T."/>
            <person name="Suzuki Y."/>
            <person name="Nishikawa T."/>
            <person name="Otsuki T."/>
            <person name="Sugiyama T."/>
            <person name="Irie R."/>
            <person name="Wakamatsu A."/>
            <person name="Hayashi K."/>
            <person name="Sato H."/>
            <person name="Nagai K."/>
            <person name="Kimura K."/>
            <person name="Makita H."/>
            <person name="Sekine M."/>
            <person name="Obayashi M."/>
            <person name="Nishi T."/>
            <person name="Shibahara T."/>
            <person name="Tanaka T."/>
            <person name="Ishii S."/>
            <person name="Yamamoto J."/>
            <person name="Saito K."/>
            <person name="Kawai Y."/>
            <person name="Isono Y."/>
            <person name="Nakamura Y."/>
            <person name="Nagahari K."/>
            <person name="Murakami K."/>
            <person name="Yasuda T."/>
            <person name="Iwayanagi T."/>
            <person name="Wagatsuma M."/>
            <person name="Shiratori A."/>
            <person name="Sudo H."/>
            <person name="Hosoiri T."/>
            <person name="Kaku Y."/>
            <person name="Kodaira H."/>
            <person name="Kondo H."/>
            <person name="Sugawara M."/>
            <person name="Takahashi M."/>
            <person name="Kanda K."/>
            <person name="Yokoi T."/>
            <person name="Furuya T."/>
            <person name="Kikkawa E."/>
            <person name="Omura Y."/>
            <person name="Abe K."/>
            <person name="Kamihara K."/>
            <person name="Katsuta N."/>
            <person name="Sato K."/>
            <person name="Tanikawa M."/>
            <person name="Yamazaki M."/>
            <person name="Ninomiya K."/>
            <person name="Ishibashi T."/>
            <person name="Yamashita H."/>
            <person name="Murakawa K."/>
            <person name="Fujimori K."/>
            <person name="Tanai H."/>
            <person name="Kimata M."/>
            <person name="Watanabe M."/>
            <person name="Hiraoka S."/>
            <person name="Chiba Y."/>
            <person name="Ishida S."/>
            <person name="Ono Y."/>
            <person name="Takiguchi S."/>
            <person name="Watanabe S."/>
            <person name="Yosida M."/>
            <person name="Hotuta T."/>
            <person name="Kusano J."/>
            <person name="Kanehori K."/>
            <person name="Takahashi-Fujii A."/>
            <person name="Hara H."/>
            <person name="Tanase T.-O."/>
            <person name="Nomura Y."/>
            <person name="Togiya S."/>
            <person name="Komai F."/>
            <person name="Hara R."/>
            <person name="Takeuchi K."/>
            <person name="Arita M."/>
            <person name="Imose N."/>
            <person name="Musashino K."/>
            <person name="Yuuki H."/>
            <person name="Oshima A."/>
            <person name="Sasaki N."/>
            <person name="Aotsuka S."/>
            <person name="Yoshikawa Y."/>
            <person name="Matsunawa H."/>
            <person name="Ichihara T."/>
            <person name="Shiohata N."/>
            <person name="Sano S."/>
            <person name="Moriya S."/>
            <person name="Momiyama H."/>
            <person name="Satoh N."/>
            <person name="Takami S."/>
            <person name="Terashima Y."/>
            <person name="Suzuki O."/>
            <person name="Nakagawa S."/>
            <person name="Senoh A."/>
            <person name="Mizoguchi H."/>
            <person name="Goto Y."/>
            <person name="Shimizu F."/>
            <person name="Wakebe H."/>
            <person name="Hishigaki H."/>
            <person name="Watanabe T."/>
            <person name="Sugiyama A."/>
            <person name="Takemoto M."/>
            <person name="Kawakami B."/>
            <person name="Yamazaki M."/>
            <person name="Watanabe K."/>
            <person name="Kumagai A."/>
            <person name="Itakura S."/>
            <person name="Fukuzumi Y."/>
            <person name="Fujimori Y."/>
            <person name="Komiyama M."/>
            <person name="Tashiro H."/>
            <person name="Tanigami A."/>
            <person name="Fujiwara T."/>
            <person name="Ono T."/>
            <person name="Yamada K."/>
            <person name="Fujii Y."/>
            <person name="Ozaki K."/>
            <person name="Hirao M."/>
            <person name="Ohmori Y."/>
            <person name="Kawabata A."/>
            <person name="Hikiji T."/>
            <person name="Kobatake N."/>
            <person name="Inagaki H."/>
            <person name="Ikema Y."/>
            <person name="Okamoto S."/>
            <person name="Okitani R."/>
            <person name="Kawakami T."/>
            <person name="Noguchi S."/>
            <person name="Itoh T."/>
            <person name="Shigeta K."/>
            <person name="Senba T."/>
            <person name="Matsumura K."/>
            <person name="Nakajima Y."/>
            <person name="Mizuno T."/>
            <person name="Morinaga M."/>
            <person name="Sasaki M."/>
            <person name="Togashi T."/>
            <person name="Oyama M."/>
            <person name="Hata H."/>
            <person name="Watanabe M."/>
            <person name="Komatsu T."/>
            <person name="Mizushima-Sugano J."/>
            <person name="Satoh T."/>
            <person name="Shirai Y."/>
            <person name="Takahashi Y."/>
            <person name="Nakagawa K."/>
            <person name="Okumura K."/>
            <person name="Nagase T."/>
            <person name="Nomura N."/>
            <person name="Kikuchi H."/>
            <person name="Masuho Y."/>
            <person name="Yamashita R."/>
            <person name="Nakai K."/>
            <person name="Yada T."/>
            <person name="Nakamura Y."/>
            <person name="Ohara O."/>
            <person name="Isogai T."/>
            <person name="Sugano S."/>
        </authorList>
    </citation>
    <scope>NUCLEOTIDE SEQUENCE [LARGE SCALE MRNA] (ISOFORMS 1; 2 AND 3)</scope>
    <scope>VARIANT MET-88</scope>
    <source>
        <tissue>Fetal brain</tissue>
        <tissue>Neuroepithelioma</tissue>
        <tissue>Small intestine</tissue>
    </source>
</reference>
<reference key="2">
    <citation type="submission" date="2005-04" db="EMBL/GenBank/DDBJ databases">
        <authorList>
            <person name="Totoki Y."/>
            <person name="Toyoda A."/>
            <person name="Takeda T."/>
            <person name="Sakaki Y."/>
            <person name="Tanaka A."/>
            <person name="Yokoyama S."/>
        </authorList>
    </citation>
    <scope>NUCLEOTIDE SEQUENCE [LARGE SCALE MRNA] (ISOFORM 1)</scope>
    <source>
        <tissue>Liver cancer</tissue>
    </source>
</reference>
<reference key="3">
    <citation type="journal article" date="2005" name="Nature">
        <title>The DNA sequence of the human X chromosome.</title>
        <authorList>
            <person name="Ross M.T."/>
            <person name="Grafham D.V."/>
            <person name="Coffey A.J."/>
            <person name="Scherer S."/>
            <person name="McLay K."/>
            <person name="Muzny D."/>
            <person name="Platzer M."/>
            <person name="Howell G.R."/>
            <person name="Burrows C."/>
            <person name="Bird C.P."/>
            <person name="Frankish A."/>
            <person name="Lovell F.L."/>
            <person name="Howe K.L."/>
            <person name="Ashurst J.L."/>
            <person name="Fulton R.S."/>
            <person name="Sudbrak R."/>
            <person name="Wen G."/>
            <person name="Jones M.C."/>
            <person name="Hurles M.E."/>
            <person name="Andrews T.D."/>
            <person name="Scott C.E."/>
            <person name="Searle S."/>
            <person name="Ramser J."/>
            <person name="Whittaker A."/>
            <person name="Deadman R."/>
            <person name="Carter N.P."/>
            <person name="Hunt S.E."/>
            <person name="Chen R."/>
            <person name="Cree A."/>
            <person name="Gunaratne P."/>
            <person name="Havlak P."/>
            <person name="Hodgson A."/>
            <person name="Metzker M.L."/>
            <person name="Richards S."/>
            <person name="Scott G."/>
            <person name="Steffen D."/>
            <person name="Sodergren E."/>
            <person name="Wheeler D.A."/>
            <person name="Worley K.C."/>
            <person name="Ainscough R."/>
            <person name="Ambrose K.D."/>
            <person name="Ansari-Lari M.A."/>
            <person name="Aradhya S."/>
            <person name="Ashwell R.I."/>
            <person name="Babbage A.K."/>
            <person name="Bagguley C.L."/>
            <person name="Ballabio A."/>
            <person name="Banerjee R."/>
            <person name="Barker G.E."/>
            <person name="Barlow K.F."/>
            <person name="Barrett I.P."/>
            <person name="Bates K.N."/>
            <person name="Beare D.M."/>
            <person name="Beasley H."/>
            <person name="Beasley O."/>
            <person name="Beck A."/>
            <person name="Bethel G."/>
            <person name="Blechschmidt K."/>
            <person name="Brady N."/>
            <person name="Bray-Allen S."/>
            <person name="Bridgeman A.M."/>
            <person name="Brown A.J."/>
            <person name="Brown M.J."/>
            <person name="Bonnin D."/>
            <person name="Bruford E.A."/>
            <person name="Buhay C."/>
            <person name="Burch P."/>
            <person name="Burford D."/>
            <person name="Burgess J."/>
            <person name="Burrill W."/>
            <person name="Burton J."/>
            <person name="Bye J.M."/>
            <person name="Carder C."/>
            <person name="Carrel L."/>
            <person name="Chako J."/>
            <person name="Chapman J.C."/>
            <person name="Chavez D."/>
            <person name="Chen E."/>
            <person name="Chen G."/>
            <person name="Chen Y."/>
            <person name="Chen Z."/>
            <person name="Chinault C."/>
            <person name="Ciccodicola A."/>
            <person name="Clark S.Y."/>
            <person name="Clarke G."/>
            <person name="Clee C.M."/>
            <person name="Clegg S."/>
            <person name="Clerc-Blankenburg K."/>
            <person name="Clifford K."/>
            <person name="Cobley V."/>
            <person name="Cole C.G."/>
            <person name="Conquer J.S."/>
            <person name="Corby N."/>
            <person name="Connor R.E."/>
            <person name="David R."/>
            <person name="Davies J."/>
            <person name="Davis C."/>
            <person name="Davis J."/>
            <person name="Delgado O."/>
            <person name="Deshazo D."/>
            <person name="Dhami P."/>
            <person name="Ding Y."/>
            <person name="Dinh H."/>
            <person name="Dodsworth S."/>
            <person name="Draper H."/>
            <person name="Dugan-Rocha S."/>
            <person name="Dunham A."/>
            <person name="Dunn M."/>
            <person name="Durbin K.J."/>
            <person name="Dutta I."/>
            <person name="Eades T."/>
            <person name="Ellwood M."/>
            <person name="Emery-Cohen A."/>
            <person name="Errington H."/>
            <person name="Evans K.L."/>
            <person name="Faulkner L."/>
            <person name="Francis F."/>
            <person name="Frankland J."/>
            <person name="Fraser A.E."/>
            <person name="Galgoczy P."/>
            <person name="Gilbert J."/>
            <person name="Gill R."/>
            <person name="Gloeckner G."/>
            <person name="Gregory S.G."/>
            <person name="Gribble S."/>
            <person name="Griffiths C."/>
            <person name="Grocock R."/>
            <person name="Gu Y."/>
            <person name="Gwilliam R."/>
            <person name="Hamilton C."/>
            <person name="Hart E.A."/>
            <person name="Hawes A."/>
            <person name="Heath P.D."/>
            <person name="Heitmann K."/>
            <person name="Hennig S."/>
            <person name="Hernandez J."/>
            <person name="Hinzmann B."/>
            <person name="Ho S."/>
            <person name="Hoffs M."/>
            <person name="Howden P.J."/>
            <person name="Huckle E.J."/>
            <person name="Hume J."/>
            <person name="Hunt P.J."/>
            <person name="Hunt A.R."/>
            <person name="Isherwood J."/>
            <person name="Jacob L."/>
            <person name="Johnson D."/>
            <person name="Jones S."/>
            <person name="de Jong P.J."/>
            <person name="Joseph S.S."/>
            <person name="Keenan S."/>
            <person name="Kelly S."/>
            <person name="Kershaw J.K."/>
            <person name="Khan Z."/>
            <person name="Kioschis P."/>
            <person name="Klages S."/>
            <person name="Knights A.J."/>
            <person name="Kosiura A."/>
            <person name="Kovar-Smith C."/>
            <person name="Laird G.K."/>
            <person name="Langford C."/>
            <person name="Lawlor S."/>
            <person name="Leversha M."/>
            <person name="Lewis L."/>
            <person name="Liu W."/>
            <person name="Lloyd C."/>
            <person name="Lloyd D.M."/>
            <person name="Loulseged H."/>
            <person name="Loveland J.E."/>
            <person name="Lovell J.D."/>
            <person name="Lozado R."/>
            <person name="Lu J."/>
            <person name="Lyne R."/>
            <person name="Ma J."/>
            <person name="Maheshwari M."/>
            <person name="Matthews L.H."/>
            <person name="McDowall J."/>
            <person name="McLaren S."/>
            <person name="McMurray A."/>
            <person name="Meidl P."/>
            <person name="Meitinger T."/>
            <person name="Milne S."/>
            <person name="Miner G."/>
            <person name="Mistry S.L."/>
            <person name="Morgan M."/>
            <person name="Morris S."/>
            <person name="Mueller I."/>
            <person name="Mullikin J.C."/>
            <person name="Nguyen N."/>
            <person name="Nordsiek G."/>
            <person name="Nyakatura G."/>
            <person name="O'dell C.N."/>
            <person name="Okwuonu G."/>
            <person name="Palmer S."/>
            <person name="Pandian R."/>
            <person name="Parker D."/>
            <person name="Parrish J."/>
            <person name="Pasternak S."/>
            <person name="Patel D."/>
            <person name="Pearce A.V."/>
            <person name="Pearson D.M."/>
            <person name="Pelan S.E."/>
            <person name="Perez L."/>
            <person name="Porter K.M."/>
            <person name="Ramsey Y."/>
            <person name="Reichwald K."/>
            <person name="Rhodes S."/>
            <person name="Ridler K.A."/>
            <person name="Schlessinger D."/>
            <person name="Schueler M.G."/>
            <person name="Sehra H.K."/>
            <person name="Shaw-Smith C."/>
            <person name="Shen H."/>
            <person name="Sheridan E.M."/>
            <person name="Shownkeen R."/>
            <person name="Skuce C.D."/>
            <person name="Smith M.L."/>
            <person name="Sotheran E.C."/>
            <person name="Steingruber H.E."/>
            <person name="Steward C.A."/>
            <person name="Storey R."/>
            <person name="Swann R.M."/>
            <person name="Swarbreck D."/>
            <person name="Tabor P.E."/>
            <person name="Taudien S."/>
            <person name="Taylor T."/>
            <person name="Teague B."/>
            <person name="Thomas K."/>
            <person name="Thorpe A."/>
            <person name="Timms K."/>
            <person name="Tracey A."/>
            <person name="Trevanion S."/>
            <person name="Tromans A.C."/>
            <person name="d'Urso M."/>
            <person name="Verduzco D."/>
            <person name="Villasana D."/>
            <person name="Waldron L."/>
            <person name="Wall M."/>
            <person name="Wang Q."/>
            <person name="Warren J."/>
            <person name="Warry G.L."/>
            <person name="Wei X."/>
            <person name="West A."/>
            <person name="Whitehead S.L."/>
            <person name="Whiteley M.N."/>
            <person name="Wilkinson J.E."/>
            <person name="Willey D.L."/>
            <person name="Williams G."/>
            <person name="Williams L."/>
            <person name="Williamson A."/>
            <person name="Williamson H."/>
            <person name="Wilming L."/>
            <person name="Woodmansey R.L."/>
            <person name="Wray P.W."/>
            <person name="Yen J."/>
            <person name="Zhang J."/>
            <person name="Zhou J."/>
            <person name="Zoghbi H."/>
            <person name="Zorilla S."/>
            <person name="Buck D."/>
            <person name="Reinhardt R."/>
            <person name="Poustka A."/>
            <person name="Rosenthal A."/>
            <person name="Lehrach H."/>
            <person name="Meindl A."/>
            <person name="Minx P.J."/>
            <person name="Hillier L.W."/>
            <person name="Willard H.F."/>
            <person name="Wilson R.K."/>
            <person name="Waterston R.H."/>
            <person name="Rice C.M."/>
            <person name="Vaudin M."/>
            <person name="Coulson A."/>
            <person name="Nelson D.L."/>
            <person name="Weinstock G."/>
            <person name="Sulston J.E."/>
            <person name="Durbin R.M."/>
            <person name="Hubbard T."/>
            <person name="Gibbs R.A."/>
            <person name="Beck S."/>
            <person name="Rogers J."/>
            <person name="Bentley D.R."/>
        </authorList>
    </citation>
    <scope>NUCLEOTIDE SEQUENCE [LARGE SCALE GENOMIC DNA]</scope>
</reference>
<reference key="4">
    <citation type="submission" date="2005-07" db="EMBL/GenBank/DDBJ databases">
        <authorList>
            <person name="Mural R.J."/>
            <person name="Istrail S."/>
            <person name="Sutton G.G."/>
            <person name="Florea L."/>
            <person name="Halpern A.L."/>
            <person name="Mobarry C.M."/>
            <person name="Lippert R."/>
            <person name="Walenz B."/>
            <person name="Shatkay H."/>
            <person name="Dew I."/>
            <person name="Miller J.R."/>
            <person name="Flanigan M.J."/>
            <person name="Edwards N.J."/>
            <person name="Bolanos R."/>
            <person name="Fasulo D."/>
            <person name="Halldorsson B.V."/>
            <person name="Hannenhalli S."/>
            <person name="Turner R."/>
            <person name="Yooseph S."/>
            <person name="Lu F."/>
            <person name="Nusskern D.R."/>
            <person name="Shue B.C."/>
            <person name="Zheng X.H."/>
            <person name="Zhong F."/>
            <person name="Delcher A.L."/>
            <person name="Huson D.H."/>
            <person name="Kravitz S.A."/>
            <person name="Mouchard L."/>
            <person name="Reinert K."/>
            <person name="Remington K.A."/>
            <person name="Clark A.G."/>
            <person name="Waterman M.S."/>
            <person name="Eichler E.E."/>
            <person name="Adams M.D."/>
            <person name="Hunkapiller M.W."/>
            <person name="Myers E.W."/>
            <person name="Venter J.C."/>
        </authorList>
    </citation>
    <scope>NUCLEOTIDE SEQUENCE [LARGE SCALE GENOMIC DNA]</scope>
</reference>
<reference key="5">
    <citation type="journal article" date="2004" name="Genome Res.">
        <title>The status, quality, and expansion of the NIH full-length cDNA project: the Mammalian Gene Collection (MGC).</title>
        <authorList>
            <consortium name="The MGC Project Team"/>
        </authorList>
    </citation>
    <scope>NUCLEOTIDE SEQUENCE [LARGE SCALE MRNA] (ISOFORMS 1 AND 4)</scope>
    <source>
        <tissue>Embryonic stem cell</tissue>
        <tissue>Testis</tissue>
    </source>
</reference>
<reference key="6">
    <citation type="journal article" date="1992" name="Hum. Mol. Genet.">
        <title>Isolation of a new gene from the distal short arm of the human X chromosome that escapes X-inactivation.</title>
        <authorList>
            <person name="Yen P.H."/>
            <person name="Ellison J."/>
            <person name="Salido E.C."/>
            <person name="Mohandas T."/>
            <person name="Shapiro L."/>
        </authorList>
    </citation>
    <scope>NUCLEOTIDE SEQUENCE [MRNA] OF 4-228 (ISOFORM 1)</scope>
    <scope>VARIANT MET-88</scope>
</reference>
<reference key="7">
    <citation type="journal article" date="2010" name="Biochem. J.">
        <title>HDHD1, which is often deleted in X-linked ichthyosis, encodes a pseudouridine-5'-phosphatase.</title>
        <authorList>
            <person name="Preumont A."/>
            <person name="Rzem R."/>
            <person name="Vertommen D."/>
            <person name="Van Schaftingen E."/>
        </authorList>
    </citation>
    <scope>FUNCTION</scope>
    <scope>COFACTOR</scope>
    <scope>CATALYTIC ACTIVITY</scope>
    <scope>BIOPHYSICOCHEMICAL PROPERTIES</scope>
    <source>
        <tissue>Erythrocyte</tissue>
    </source>
</reference>
<reference key="8">
    <citation type="journal article" date="2011" name="BMC Syst. Biol.">
        <title>Initial characterization of the human central proteome.</title>
        <authorList>
            <person name="Burkard T.R."/>
            <person name="Planyavsky M."/>
            <person name="Kaupe I."/>
            <person name="Breitwieser F.P."/>
            <person name="Buerckstuemmer T."/>
            <person name="Bennett K.L."/>
            <person name="Superti-Furga G."/>
            <person name="Colinge J."/>
        </authorList>
    </citation>
    <scope>IDENTIFICATION BY MASS SPECTROMETRY [LARGE SCALE ANALYSIS]</scope>
</reference>
<reference key="9">
    <citation type="submission" date="2010-03" db="PDB data bank">
        <title>The crystal structure of human haloacid dehalogenase-like hydrolase domain containing 1A (HDHD1A).</title>
        <authorList>
            <consortium name="Structural genomics consortium (SGC)"/>
        </authorList>
    </citation>
    <scope>X-RAY CRYSTALLOGRAPHY (2.0 ANGSTROMS)</scope>
</reference>
<feature type="chain" id="PRO_0000108068" description="Pseudouridine-5'-phosphatase">
    <location>
        <begin position="1"/>
        <end position="228"/>
    </location>
</feature>
<feature type="active site" description="Nucleophile" evidence="1">
    <location>
        <position position="14"/>
    </location>
</feature>
<feature type="active site" description="Proton donor" evidence="1">
    <location>
        <position position="16"/>
    </location>
</feature>
<feature type="binding site" evidence="1">
    <location>
        <position position="14"/>
    </location>
    <ligand>
        <name>Mg(2+)</name>
        <dbReference type="ChEBI" id="CHEBI:18420"/>
    </ligand>
</feature>
<feature type="binding site" evidence="1">
    <location>
        <position position="16"/>
    </location>
    <ligand>
        <name>Mg(2+)</name>
        <dbReference type="ChEBI" id="CHEBI:18420"/>
    </ligand>
</feature>
<feature type="splice variant" id="VSP_044804" description="In isoform 4." evidence="6">
    <original>L</original>
    <variation>LGYTGSIVAAASGESSRGLQSRWT</variation>
    <location>
        <position position="20"/>
    </location>
</feature>
<feature type="splice variant" id="VSP_040029" description="In isoform 2." evidence="5">
    <location>
        <begin position="51"/>
        <end position="93"/>
    </location>
</feature>
<feature type="splice variant" id="VSP_042020" description="In isoform 3." evidence="5">
    <original>CLVFEDAPNGVEAALAAGMQVVMVPDGNLSRDLTTKATLVLNSLQDFQPELFGLPSYE</original>
    <variation>SSIHRPRLLTAQKCQGCRDPFSALLLLCNQLLLCSDDT</variation>
    <location>
        <begin position="171"/>
        <end position="228"/>
    </location>
</feature>
<feature type="sequence variant" id="VAR_061094" description="In dbSNP:rs1131197." evidence="2 3">
    <original>T</original>
    <variation>M</variation>
    <location>
        <position position="88"/>
    </location>
</feature>
<feature type="sequence variant" id="VAR_060625" description="In dbSNP:rs3747386.">
    <original>P</original>
    <variation>A</variation>
    <location>
        <position position="165"/>
    </location>
</feature>
<feature type="sequence conflict" description="In Ref. 5; AAH12494." evidence="7" ref="5">
    <original>G</original>
    <variation>R</variation>
    <location>
        <position position="116"/>
    </location>
</feature>
<feature type="sequence conflict" description="In Ref. 1; BAD97125." evidence="7" ref="1">
    <original>D</original>
    <variation>G</variation>
    <location>
        <position position="153"/>
    </location>
</feature>
<feature type="sequence conflict" description="In Ref. 6; AAA58622." evidence="7" ref="6">
    <original>V</original>
    <variation>A</variation>
    <location>
        <position position="191"/>
    </location>
</feature>
<feature type="strand" evidence="9">
    <location>
        <begin position="1"/>
        <end position="3"/>
    </location>
</feature>
<feature type="strand" evidence="9">
    <location>
        <begin position="9"/>
        <end position="14"/>
    </location>
</feature>
<feature type="turn" evidence="9">
    <location>
        <begin position="17"/>
        <end position="19"/>
    </location>
</feature>
<feature type="helix" evidence="9">
    <location>
        <begin position="22"/>
        <end position="36"/>
    </location>
</feature>
<feature type="helix" evidence="9">
    <location>
        <begin position="43"/>
        <end position="49"/>
    </location>
</feature>
<feature type="helix" evidence="9">
    <location>
        <begin position="54"/>
        <end position="65"/>
    </location>
</feature>
<feature type="helix" evidence="9">
    <location>
        <begin position="71"/>
        <end position="85"/>
    </location>
</feature>
<feature type="helix" evidence="9">
    <location>
        <begin position="86"/>
        <end position="88"/>
    </location>
</feature>
<feature type="helix" evidence="9">
    <location>
        <begin position="95"/>
        <end position="104"/>
    </location>
</feature>
<feature type="strand" evidence="9">
    <location>
        <begin position="109"/>
        <end position="112"/>
    </location>
</feature>
<feature type="helix" evidence="9">
    <location>
        <begin position="117"/>
        <end position="123"/>
    </location>
</feature>
<feature type="turn" evidence="9">
    <location>
        <begin position="124"/>
        <end position="126"/>
    </location>
</feature>
<feature type="helix" evidence="9">
    <location>
        <begin position="128"/>
        <end position="131"/>
    </location>
</feature>
<feature type="helix" evidence="9">
    <location>
        <begin position="153"/>
        <end position="160"/>
    </location>
</feature>
<feature type="strand" evidence="9">
    <location>
        <begin position="162"/>
        <end position="164"/>
    </location>
</feature>
<feature type="helix" evidence="9">
    <location>
        <begin position="168"/>
        <end position="170"/>
    </location>
</feature>
<feature type="strand" evidence="9">
    <location>
        <begin position="171"/>
        <end position="177"/>
    </location>
</feature>
<feature type="helix" evidence="9">
    <location>
        <begin position="178"/>
        <end position="186"/>
    </location>
</feature>
<feature type="strand" evidence="9">
    <location>
        <begin position="190"/>
        <end position="193"/>
    </location>
</feature>
<feature type="helix" evidence="9">
    <location>
        <begin position="201"/>
        <end position="203"/>
    </location>
</feature>
<feature type="strand" evidence="9">
    <location>
        <begin position="207"/>
        <end position="210"/>
    </location>
</feature>
<feature type="helix" evidence="9">
    <location>
        <begin position="214"/>
        <end position="216"/>
    </location>
</feature>
<feature type="helix" evidence="9">
    <location>
        <begin position="219"/>
        <end position="222"/>
    </location>
</feature>
<feature type="sequence conflict" description="In Ref. 1; BAH13339." evidence="7" ref="1">
    <original>C</original>
    <variation>S</variation>
    <location sequence="Q08623-3">
        <position position="198"/>
    </location>
</feature>
<comment type="function">
    <text evidence="4">Dephosphorylates pseudouridine 5'-phosphate, a potential intermediate in rRNA degradation. Pseudouridine is then excreted intact in urine.</text>
</comment>
<comment type="catalytic activity">
    <reaction evidence="4">
        <text>psi-UMP + H2O = pseudouridine + phosphate</text>
        <dbReference type="Rhea" id="RHEA:10944"/>
        <dbReference type="ChEBI" id="CHEBI:15377"/>
        <dbReference type="ChEBI" id="CHEBI:17802"/>
        <dbReference type="ChEBI" id="CHEBI:43474"/>
        <dbReference type="ChEBI" id="CHEBI:58380"/>
        <dbReference type="EC" id="3.1.3.96"/>
    </reaction>
</comment>
<comment type="cofactor">
    <cofactor evidence="4">
        <name>Mg(2+)</name>
        <dbReference type="ChEBI" id="CHEBI:18420"/>
    </cofactor>
</comment>
<comment type="biophysicochemical properties">
    <kinetics>
        <KM evidence="4">0.38 uM for 5'-PsiMP</KM>
        <KM evidence="4">1.5 mM for 3'-AMP</KM>
        <KM evidence="4">5.9 mM for Fructose-6-P</KM>
        <KM evidence="4">9.4 mM for 5'-UMP</KM>
    </kinetics>
</comment>
<comment type="interaction">
    <interactant intactId="EBI-12807240">
        <id>Q08623</id>
    </interactant>
    <interactant intactId="EBI-8643161">
        <id>Q9NX04</id>
        <label>AIRIM</label>
    </interactant>
    <organismsDiffer>false</organismsDiffer>
    <experiments>3</experiments>
</comment>
<comment type="interaction">
    <interactant intactId="EBI-12807240">
        <id>Q08623</id>
    </interactant>
    <interactant intactId="EBI-748515">
        <id>Q8IVS8</id>
        <label>GLYCTK</label>
    </interactant>
    <organismsDiffer>false</organismsDiffer>
    <experiments>3</experiments>
</comment>
<comment type="interaction">
    <interactant intactId="EBI-12807240">
        <id>Q08623</id>
    </interactant>
    <interactant intactId="EBI-743122">
        <id>P43358</id>
        <label>MAGEA4</label>
    </interactant>
    <organismsDiffer>false</organismsDiffer>
    <experiments>3</experiments>
</comment>
<comment type="alternative products">
    <event type="alternative splicing"/>
    <isoform>
        <id>Q08623-1</id>
        <name>1</name>
        <sequence type="displayed"/>
    </isoform>
    <isoform>
        <id>Q08623-2</id>
        <name>2</name>
        <sequence type="described" ref="VSP_040029"/>
    </isoform>
    <isoform>
        <id>Q08623-3</id>
        <name>3</name>
        <sequence type="described" ref="VSP_042020"/>
    </isoform>
    <isoform>
        <id>Q08623-4</id>
        <name>4</name>
        <sequence type="described" ref="VSP_044804"/>
    </isoform>
</comment>
<comment type="induction">
    <text>Inhibited by low concentrations of calcium.</text>
</comment>
<comment type="similarity">
    <text evidence="7">Belongs to the HAD-like hydrolase superfamily. CbbY/CbbZ/Gph/YieH family.</text>
</comment>
<comment type="sequence caution" evidence="7">
    <conflict type="erroneous initiation">
        <sequence resource="EMBL-CDS" id="AAA58622"/>
    </conflict>
    <text>Truncated N-terminus.</text>
</comment>
<comment type="sequence caution" evidence="7">
    <conflict type="erroneous initiation">
        <sequence resource="EMBL-CDS" id="AAH12494"/>
    </conflict>
    <text>Truncated N-terminus.</text>
</comment>
<comment type="sequence caution" evidence="7">
    <conflict type="erroneous initiation">
        <sequence resource="EMBL-CDS" id="BAD97125"/>
    </conflict>
    <text>Truncated N-terminus.</text>
</comment>
<comment type="sequence caution" evidence="7">
    <conflict type="erroneous initiation">
        <sequence resource="EMBL-CDS" id="BAG35973"/>
    </conflict>
    <text>Truncated N-terminus.</text>
</comment>
<protein>
    <recommendedName>
        <fullName evidence="8">Pseudouridine-5'-phosphatase</fullName>
        <ecNumber>3.1.3.96</ecNumber>
    </recommendedName>
    <alternativeName>
        <fullName>Haloacid dehalogenase-like hydrolase domain-containing protein 1</fullName>
    </alternativeName>
    <alternativeName>
        <fullName>Haloacid dehalogenase-like hydrolase domain-containing protein 1A</fullName>
    </alternativeName>
    <alternativeName>
        <fullName>Protein GS1</fullName>
    </alternativeName>
    <alternativeName>
        <fullName>Pseudouridine-5'-monophosphatase</fullName>
        <shortName>5'-PsiMPase</shortName>
    </alternativeName>
</protein>
<keyword id="KW-0002">3D-structure</keyword>
<keyword id="KW-0025">Alternative splicing</keyword>
<keyword id="KW-0378">Hydrolase</keyword>
<keyword id="KW-0460">Magnesium</keyword>
<keyword id="KW-0479">Metal-binding</keyword>
<keyword id="KW-0546">Nucleotide metabolism</keyword>
<keyword id="KW-1267">Proteomics identification</keyword>
<keyword id="KW-1185">Reference proteome</keyword>
<sequence length="228" mass="25249">MAAPPQPVTHLIFDMDGLLLDTERLYSVVFQEICNRYDKKYSWDVKSLVMGKKALEAAQIIIDVLQLPMSKEELVEESQTKLKEVFPTAALMPGAEKLIIHLRKHGIPFALATSSGSASFDMKTSRHKEFFSLFSHIVLGDDPEVQHGKPDPDIFLACAKRFSPPPAMEKCLVFEDAPNGVEAALAAGMQVVMVPDGNLSRDLTTKATLVLNSLQDFQPELFGLPSYE</sequence>
<dbReference type="EC" id="3.1.3.96"/>
<dbReference type="EMBL" id="AK300985">
    <property type="protein sequence ID" value="BAG62605.1"/>
    <property type="molecule type" value="mRNA"/>
</dbReference>
<dbReference type="EMBL" id="AK313155">
    <property type="protein sequence ID" value="BAG35973.1"/>
    <property type="status" value="ALT_INIT"/>
    <property type="molecule type" value="mRNA"/>
</dbReference>
<dbReference type="EMBL" id="AK223405">
    <property type="protein sequence ID" value="BAD97125.1"/>
    <property type="status" value="ALT_INIT"/>
    <property type="molecule type" value="mRNA"/>
</dbReference>
<dbReference type="EMBL" id="AK300740">
    <property type="protein sequence ID" value="BAH13339.1"/>
    <property type="molecule type" value="mRNA"/>
</dbReference>
<dbReference type="EMBL" id="AC073583">
    <property type="status" value="NOT_ANNOTATED_CDS"/>
    <property type="molecule type" value="Genomic_DNA"/>
</dbReference>
<dbReference type="EMBL" id="CH471074">
    <property type="protein sequence ID" value="EAW98748.1"/>
    <property type="molecule type" value="Genomic_DNA"/>
</dbReference>
<dbReference type="EMBL" id="BC012494">
    <property type="protein sequence ID" value="AAH12494.1"/>
    <property type="status" value="ALT_INIT"/>
    <property type="molecule type" value="mRNA"/>
</dbReference>
<dbReference type="EMBL" id="DR156836">
    <property type="status" value="NOT_ANNOTATED_CDS"/>
    <property type="molecule type" value="mRNA"/>
</dbReference>
<dbReference type="EMBL" id="M86934">
    <property type="protein sequence ID" value="AAA58622.1"/>
    <property type="status" value="ALT_INIT"/>
    <property type="molecule type" value="mRNA"/>
</dbReference>
<dbReference type="CCDS" id="CCDS48075.1">
    <molecule id="Q08623-1"/>
</dbReference>
<dbReference type="CCDS" id="CCDS48076.1">
    <molecule id="Q08623-4"/>
</dbReference>
<dbReference type="CCDS" id="CCDS55366.1">
    <molecule id="Q08623-3"/>
</dbReference>
<dbReference type="CCDS" id="CCDS55367.1">
    <molecule id="Q08623-2"/>
</dbReference>
<dbReference type="RefSeq" id="NP_001129037.1">
    <molecule id="Q08623-4"/>
    <property type="nucleotide sequence ID" value="NM_001135565.2"/>
</dbReference>
<dbReference type="RefSeq" id="NP_001171606.1">
    <molecule id="Q08623-3"/>
    <property type="nucleotide sequence ID" value="NM_001178135.2"/>
</dbReference>
<dbReference type="RefSeq" id="NP_001171607.1">
    <molecule id="Q08623-2"/>
    <property type="nucleotide sequence ID" value="NM_001178136.2"/>
</dbReference>
<dbReference type="RefSeq" id="NP_036212.3">
    <molecule id="Q08623-1"/>
    <property type="nucleotide sequence ID" value="NM_012080.5"/>
</dbReference>
<dbReference type="PDB" id="3L5K">
    <property type="method" value="X-ray"/>
    <property type="resolution" value="2.00 A"/>
    <property type="chains" value="A=1-228"/>
</dbReference>
<dbReference type="PDBsum" id="3L5K"/>
<dbReference type="SMR" id="Q08623"/>
<dbReference type="BioGRID" id="113859">
    <property type="interactions" value="76"/>
</dbReference>
<dbReference type="FunCoup" id="Q08623">
    <property type="interactions" value="524"/>
</dbReference>
<dbReference type="IntAct" id="Q08623">
    <property type="interactions" value="47"/>
</dbReference>
<dbReference type="STRING" id="9606.ENSP00000396452"/>
<dbReference type="DEPOD" id="PUDP"/>
<dbReference type="iPTMnet" id="Q08623"/>
<dbReference type="PhosphoSitePlus" id="Q08623"/>
<dbReference type="BioMuta" id="PUDP"/>
<dbReference type="DMDM" id="269849688"/>
<dbReference type="jPOST" id="Q08623"/>
<dbReference type="MassIVE" id="Q08623"/>
<dbReference type="PaxDb" id="9606-ENSP00000396452"/>
<dbReference type="PeptideAtlas" id="Q08623"/>
<dbReference type="ProteomicsDB" id="19089"/>
<dbReference type="ProteomicsDB" id="58634">
    <molecule id="Q08623-1"/>
</dbReference>
<dbReference type="ProteomicsDB" id="58635">
    <molecule id="Q08623-2"/>
</dbReference>
<dbReference type="ProteomicsDB" id="58636">
    <molecule id="Q08623-3"/>
</dbReference>
<dbReference type="Pumba" id="Q08623"/>
<dbReference type="Antibodypedia" id="23565">
    <property type="antibodies" value="168 antibodies from 13 providers"/>
</dbReference>
<dbReference type="DNASU" id="8226"/>
<dbReference type="Ensembl" id="ENST00000381077.10">
    <molecule id="Q08623-1"/>
    <property type="protein sequence ID" value="ENSP00000370467.6"/>
    <property type="gene ID" value="ENSG00000130021.15"/>
</dbReference>
<dbReference type="Ensembl" id="ENST00000412827.6">
    <molecule id="Q08623-2"/>
    <property type="protein sequence ID" value="ENSP00000406260.2"/>
    <property type="gene ID" value="ENSG00000130021.15"/>
</dbReference>
<dbReference type="Ensembl" id="ENST00000424830.6">
    <molecule id="Q08623-4"/>
    <property type="protein sequence ID" value="ENSP00000396452.2"/>
    <property type="gene ID" value="ENSG00000130021.15"/>
</dbReference>
<dbReference type="Ensembl" id="ENST00000486446.3">
    <molecule id="Q08623-3"/>
    <property type="protein sequence ID" value="ENSP00000430995.2"/>
    <property type="gene ID" value="ENSG00000130021.15"/>
</dbReference>
<dbReference type="GeneID" id="8226"/>
<dbReference type="KEGG" id="hsa:8226"/>
<dbReference type="MANE-Select" id="ENST00000381077.10">
    <property type="protein sequence ID" value="ENSP00000370467.6"/>
    <property type="RefSeq nucleotide sequence ID" value="NM_012080.5"/>
    <property type="RefSeq protein sequence ID" value="NP_036212.3"/>
</dbReference>
<dbReference type="UCSC" id="uc004crv.2">
    <molecule id="Q08623-1"/>
    <property type="organism name" value="human"/>
</dbReference>
<dbReference type="AGR" id="HGNC:16818"/>
<dbReference type="CTD" id="8226"/>
<dbReference type="DisGeNET" id="8226"/>
<dbReference type="GeneCards" id="PUDP"/>
<dbReference type="HGNC" id="HGNC:16818">
    <property type="gene designation" value="PUDP"/>
</dbReference>
<dbReference type="HPA" id="ENSG00000130021">
    <property type="expression patterns" value="Low tissue specificity"/>
</dbReference>
<dbReference type="MIM" id="306480">
    <property type="type" value="gene"/>
</dbReference>
<dbReference type="neXtProt" id="NX_Q08623"/>
<dbReference type="OpenTargets" id="ENSG00000130021"/>
<dbReference type="PharmGKB" id="PA165756731"/>
<dbReference type="VEuPathDB" id="HostDB:ENSG00000130021"/>
<dbReference type="eggNOG" id="KOG2914">
    <property type="taxonomic scope" value="Eukaryota"/>
</dbReference>
<dbReference type="GeneTree" id="ENSGT00390000014753"/>
<dbReference type="HOGENOM" id="CLU_045011_13_0_1"/>
<dbReference type="InParanoid" id="Q08623"/>
<dbReference type="OMA" id="IWCPHPG"/>
<dbReference type="OrthoDB" id="40579at2759"/>
<dbReference type="PAN-GO" id="Q08623">
    <property type="GO annotations" value="1 GO annotation based on evolutionary models"/>
</dbReference>
<dbReference type="PhylomeDB" id="Q08623"/>
<dbReference type="TreeFam" id="TF105946"/>
<dbReference type="PathwayCommons" id="Q08623"/>
<dbReference type="Reactome" id="R-HSA-73614">
    <property type="pathway name" value="Pyrimidine salvage"/>
</dbReference>
<dbReference type="SABIO-RK" id="Q08623"/>
<dbReference type="SignaLink" id="Q08623"/>
<dbReference type="BioGRID-ORCS" id="8226">
    <property type="hits" value="9 hits in 772 CRISPR screens"/>
</dbReference>
<dbReference type="ChiTaRS" id="PUDP">
    <property type="organism name" value="human"/>
</dbReference>
<dbReference type="EvolutionaryTrace" id="Q08623"/>
<dbReference type="GeneWiki" id="HDHD1A"/>
<dbReference type="GenomeRNAi" id="8226"/>
<dbReference type="Pharos" id="Q08623">
    <property type="development level" value="Tbio"/>
</dbReference>
<dbReference type="PRO" id="PR:Q08623"/>
<dbReference type="Proteomes" id="UP000005640">
    <property type="component" value="Chromosome X"/>
</dbReference>
<dbReference type="RNAct" id="Q08623">
    <property type="molecule type" value="protein"/>
</dbReference>
<dbReference type="Bgee" id="ENSG00000130021">
    <property type="expression patterns" value="Expressed in skeletal muscle tissue of rectus abdominis and 202 other cell types or tissues"/>
</dbReference>
<dbReference type="ExpressionAtlas" id="Q08623">
    <property type="expression patterns" value="baseline and differential"/>
</dbReference>
<dbReference type="GO" id="GO:0005829">
    <property type="term" value="C:cytosol"/>
    <property type="evidence" value="ECO:0000304"/>
    <property type="project" value="Reactome"/>
</dbReference>
<dbReference type="GO" id="GO:0046872">
    <property type="term" value="F:metal ion binding"/>
    <property type="evidence" value="ECO:0007669"/>
    <property type="project" value="UniProtKB-KW"/>
</dbReference>
<dbReference type="GO" id="GO:0016791">
    <property type="term" value="F:phosphatase activity"/>
    <property type="evidence" value="ECO:0000318"/>
    <property type="project" value="GO_Central"/>
</dbReference>
<dbReference type="GO" id="GO:1990738">
    <property type="term" value="F:pseudouridine 5'-phosphatase activity"/>
    <property type="evidence" value="ECO:0000314"/>
    <property type="project" value="FlyBase"/>
</dbReference>
<dbReference type="GO" id="GO:0009117">
    <property type="term" value="P:nucleotide metabolic process"/>
    <property type="evidence" value="ECO:0007669"/>
    <property type="project" value="UniProtKB-KW"/>
</dbReference>
<dbReference type="CDD" id="cd07529">
    <property type="entry name" value="HAD_AtGPP-like"/>
    <property type="match status" value="1"/>
</dbReference>
<dbReference type="FunFam" id="1.10.150.240:FF:000001">
    <property type="entry name" value="Haloacid dehalogenase-like hydrolase domain"/>
    <property type="match status" value="1"/>
</dbReference>
<dbReference type="FunFam" id="3.40.50.1000:FF:000055">
    <property type="entry name" value="Haloacid dehalogenase-like hydrolase family protein"/>
    <property type="match status" value="1"/>
</dbReference>
<dbReference type="Gene3D" id="3.40.50.1000">
    <property type="entry name" value="HAD superfamily/HAD-like"/>
    <property type="match status" value="1"/>
</dbReference>
<dbReference type="Gene3D" id="1.10.150.240">
    <property type="entry name" value="Putative phosphatase, domain 2"/>
    <property type="match status" value="1"/>
</dbReference>
<dbReference type="InterPro" id="IPR045228">
    <property type="entry name" value="Gpp1/Gpp2-like"/>
</dbReference>
<dbReference type="InterPro" id="IPR036412">
    <property type="entry name" value="HAD-like_sf"/>
</dbReference>
<dbReference type="InterPro" id="IPR006439">
    <property type="entry name" value="HAD-SF_hydro_IA"/>
</dbReference>
<dbReference type="InterPro" id="IPR041492">
    <property type="entry name" value="HAD_2"/>
</dbReference>
<dbReference type="InterPro" id="IPR023214">
    <property type="entry name" value="HAD_sf"/>
</dbReference>
<dbReference type="InterPro" id="IPR023198">
    <property type="entry name" value="PGP-like_dom2"/>
</dbReference>
<dbReference type="NCBIfam" id="TIGR01509">
    <property type="entry name" value="HAD-SF-IA-v3"/>
    <property type="match status" value="1"/>
</dbReference>
<dbReference type="PANTHER" id="PTHR18901">
    <property type="entry name" value="2-DEOXYGLUCOSE-6-PHOSPHATE PHOSPHATASE 2"/>
    <property type="match status" value="1"/>
</dbReference>
<dbReference type="PANTHER" id="PTHR18901:SF43">
    <property type="entry name" value="PSEUDOURIDINE-5'-PHOSPHATASE"/>
    <property type="match status" value="1"/>
</dbReference>
<dbReference type="Pfam" id="PF13419">
    <property type="entry name" value="HAD_2"/>
    <property type="match status" value="1"/>
</dbReference>
<dbReference type="SFLD" id="SFLDG01135">
    <property type="entry name" value="C1.5.6:_HAD__Beta-PGM__Phospha"/>
    <property type="match status" value="1"/>
</dbReference>
<dbReference type="SFLD" id="SFLDS00003">
    <property type="entry name" value="Haloacid_Dehalogenase"/>
    <property type="match status" value="1"/>
</dbReference>
<dbReference type="SUPFAM" id="SSF56784">
    <property type="entry name" value="HAD-like"/>
    <property type="match status" value="1"/>
</dbReference>